<keyword id="KW-0067">ATP-binding</keyword>
<keyword id="KW-0963">Cytoplasm</keyword>
<keyword id="KW-0347">Helicase</keyword>
<keyword id="KW-0378">Hydrolase</keyword>
<keyword id="KW-0396">Initiation factor</keyword>
<keyword id="KW-0547">Nucleotide-binding</keyword>
<keyword id="KW-0648">Protein biosynthesis</keyword>
<keyword id="KW-1185">Reference proteome</keyword>
<keyword id="KW-0694">RNA-binding</keyword>
<reference key="1">
    <citation type="journal article" date="2004" name="Nature">
        <title>Genome evolution in yeasts.</title>
        <authorList>
            <person name="Dujon B."/>
            <person name="Sherman D."/>
            <person name="Fischer G."/>
            <person name="Durrens P."/>
            <person name="Casaregola S."/>
            <person name="Lafontaine I."/>
            <person name="de Montigny J."/>
            <person name="Marck C."/>
            <person name="Neuveglise C."/>
            <person name="Talla E."/>
            <person name="Goffard N."/>
            <person name="Frangeul L."/>
            <person name="Aigle M."/>
            <person name="Anthouard V."/>
            <person name="Babour A."/>
            <person name="Barbe V."/>
            <person name="Barnay S."/>
            <person name="Blanchin S."/>
            <person name="Beckerich J.-M."/>
            <person name="Beyne E."/>
            <person name="Bleykasten C."/>
            <person name="Boisrame A."/>
            <person name="Boyer J."/>
            <person name="Cattolico L."/>
            <person name="Confanioleri F."/>
            <person name="de Daruvar A."/>
            <person name="Despons L."/>
            <person name="Fabre E."/>
            <person name="Fairhead C."/>
            <person name="Ferry-Dumazet H."/>
            <person name="Groppi A."/>
            <person name="Hantraye F."/>
            <person name="Hennequin C."/>
            <person name="Jauniaux N."/>
            <person name="Joyet P."/>
            <person name="Kachouri R."/>
            <person name="Kerrest A."/>
            <person name="Koszul R."/>
            <person name="Lemaire M."/>
            <person name="Lesur I."/>
            <person name="Ma L."/>
            <person name="Muller H."/>
            <person name="Nicaud J.-M."/>
            <person name="Nikolski M."/>
            <person name="Oztas S."/>
            <person name="Ozier-Kalogeropoulos O."/>
            <person name="Pellenz S."/>
            <person name="Potier S."/>
            <person name="Richard G.-F."/>
            <person name="Straub M.-L."/>
            <person name="Suleau A."/>
            <person name="Swennen D."/>
            <person name="Tekaia F."/>
            <person name="Wesolowski-Louvel M."/>
            <person name="Westhof E."/>
            <person name="Wirth B."/>
            <person name="Zeniou-Meyer M."/>
            <person name="Zivanovic Y."/>
            <person name="Bolotin-Fukuhara M."/>
            <person name="Thierry A."/>
            <person name="Bouchier C."/>
            <person name="Caudron B."/>
            <person name="Scarpelli C."/>
            <person name="Gaillardin C."/>
            <person name="Weissenbach J."/>
            <person name="Wincker P."/>
            <person name="Souciet J.-L."/>
        </authorList>
    </citation>
    <scope>NUCLEOTIDE SEQUENCE [LARGE SCALE GENOMIC DNA]</scope>
    <source>
        <strain>ATCC 2001 / BCRC 20586 / JCM 3761 / NBRC 0622 / NRRL Y-65 / CBS 138</strain>
    </source>
</reference>
<accession>Q6FQQ6</accession>
<gene>
    <name type="primary">TIF1</name>
    <name type="synonym">TIF41</name>
    <name type="ordered locus">CAGL0I04356g</name>
</gene>
<proteinExistence type="inferred from homology"/>
<sequence length="396" mass="44787">MSTDQMTQLDESQIETNYDKVVYEFDDMNLNEKLLRGVFGYGFNKPSAIQQRAIMPIIEGNDVLAQAQSGTGKTGTFSIAALQRIDPAIKAPQALMLAPTRELALQIQKVVMALGFHMDIKVHACIGGTSFVEDAEGLRDAQIVVGTPGRVFDNIQRRKFKVDNIKMFILDEADEMLSTGFKEQIYQIFTMLPPTTQVVLLSATMPRDVLEVTAKFMQNPVRILVKKDELTLEGIKQFYVNVEEEQFKYDCLTDLYDSISVTQAVIFCNTRRKVEELTQRLTADNFTVSSIYSDLPQQERDTIMKEFRSGSSRILISTDLLARGIDVQQVSLVINYDLPTNKENYIHRIGRGGRFGRKGVAINFIVNEDVQALRELEQFYSTQIEELPSDIGTLFT</sequence>
<evidence type="ECO:0000250" key="1"/>
<evidence type="ECO:0000255" key="2">
    <source>
        <dbReference type="PROSITE-ProRule" id="PRU00541"/>
    </source>
</evidence>
<evidence type="ECO:0000255" key="3">
    <source>
        <dbReference type="PROSITE-ProRule" id="PRU00542"/>
    </source>
</evidence>
<evidence type="ECO:0000305" key="4"/>
<organism>
    <name type="scientific">Candida glabrata (strain ATCC 2001 / BCRC 20586 / JCM 3761 / NBRC 0622 / NRRL Y-65 / CBS 138)</name>
    <name type="common">Yeast</name>
    <name type="synonym">Nakaseomyces glabratus</name>
    <dbReference type="NCBI Taxonomy" id="284593"/>
    <lineage>
        <taxon>Eukaryota</taxon>
        <taxon>Fungi</taxon>
        <taxon>Dikarya</taxon>
        <taxon>Ascomycota</taxon>
        <taxon>Saccharomycotina</taxon>
        <taxon>Saccharomycetes</taxon>
        <taxon>Saccharomycetales</taxon>
        <taxon>Saccharomycetaceae</taxon>
        <taxon>Nakaseomyces</taxon>
    </lineage>
</organism>
<name>IF4A_CANGA</name>
<feature type="chain" id="PRO_0000232133" description="ATP-dependent RNA helicase eIF4A">
    <location>
        <begin position="1"/>
        <end position="396"/>
    </location>
</feature>
<feature type="domain" description="Helicase ATP-binding" evidence="2">
    <location>
        <begin position="54"/>
        <end position="223"/>
    </location>
</feature>
<feature type="domain" description="Helicase C-terminal" evidence="3">
    <location>
        <begin position="234"/>
        <end position="395"/>
    </location>
</feature>
<feature type="short sequence motif" description="Q motif">
    <location>
        <begin position="23"/>
        <end position="51"/>
    </location>
</feature>
<feature type="short sequence motif" description="DEAD box">
    <location>
        <begin position="171"/>
        <end position="174"/>
    </location>
</feature>
<feature type="binding site" evidence="2">
    <location>
        <begin position="67"/>
        <end position="74"/>
    </location>
    <ligand>
        <name>ATP</name>
        <dbReference type="ChEBI" id="CHEBI:30616"/>
    </ligand>
</feature>
<protein>
    <recommendedName>
        <fullName>ATP-dependent RNA helicase eIF4A</fullName>
        <ecNumber>3.6.4.13</ecNumber>
    </recommendedName>
    <alternativeName>
        <fullName>Eukaryotic initiation factor 4A</fullName>
        <shortName>eIF-4A</shortName>
    </alternativeName>
    <alternativeName>
        <fullName>Translation initiation factor 1</fullName>
    </alternativeName>
</protein>
<comment type="function">
    <text evidence="1">ATP-dependent RNA helicase which is a subunit of the eIF4F complex involved in cap recognition and is required for mRNA binding to ribosome. In the current model of translation initiation, eIF4A unwinds RNA secondary structures in the 5'-UTR of mRNAs which is necessary to allow efficient binding of the small ribosomal subunit, and subsequent scanning for the initiator codon (By similarity).</text>
</comment>
<comment type="catalytic activity">
    <reaction>
        <text>ATP + H2O = ADP + phosphate + H(+)</text>
        <dbReference type="Rhea" id="RHEA:13065"/>
        <dbReference type="ChEBI" id="CHEBI:15377"/>
        <dbReference type="ChEBI" id="CHEBI:15378"/>
        <dbReference type="ChEBI" id="CHEBI:30616"/>
        <dbReference type="ChEBI" id="CHEBI:43474"/>
        <dbReference type="ChEBI" id="CHEBI:456216"/>
        <dbReference type="EC" id="3.6.4.13"/>
    </reaction>
</comment>
<comment type="subunit">
    <text evidence="1">Component of the eIF4F complex, which composition varies with external and internal environmental conditions. It is composed of at least eIF4A, eIF4E and eIF4G (By similarity).</text>
</comment>
<comment type="subcellular location">
    <subcellularLocation>
        <location evidence="1">Cytoplasm</location>
    </subcellularLocation>
</comment>
<comment type="domain">
    <text>The Q motif is unique to and characteristic of the DEAD box family of RNA helicases and controls ATP binding and hydrolysis.</text>
</comment>
<comment type="similarity">
    <text evidence="4">Belongs to the DEAD box helicase family. eIF4A subfamily.</text>
</comment>
<dbReference type="EC" id="3.6.4.13"/>
<dbReference type="EMBL" id="CR380955">
    <property type="protein sequence ID" value="CAG60375.1"/>
    <property type="molecule type" value="Genomic_DNA"/>
</dbReference>
<dbReference type="RefSeq" id="XP_447438.1">
    <property type="nucleotide sequence ID" value="XM_447438.1"/>
</dbReference>
<dbReference type="SMR" id="Q6FQQ6"/>
<dbReference type="FunCoup" id="Q6FQQ6">
    <property type="interactions" value="1420"/>
</dbReference>
<dbReference type="STRING" id="284593.Q6FQQ6"/>
<dbReference type="EnsemblFungi" id="CAGL0I04356g-T">
    <property type="protein sequence ID" value="CAGL0I04356g-T-p1"/>
    <property type="gene ID" value="CAGL0I04356g"/>
</dbReference>
<dbReference type="GeneID" id="2889047"/>
<dbReference type="KEGG" id="cgr:2889047"/>
<dbReference type="CGD" id="CAL0130157">
    <property type="gene designation" value="TIF1"/>
</dbReference>
<dbReference type="VEuPathDB" id="FungiDB:B1J91_I04356g"/>
<dbReference type="VEuPathDB" id="FungiDB:CAGL0I04356g"/>
<dbReference type="eggNOG" id="KOG0327">
    <property type="taxonomic scope" value="Eukaryota"/>
</dbReference>
<dbReference type="HOGENOM" id="CLU_003041_1_0_1"/>
<dbReference type="InParanoid" id="Q6FQQ6"/>
<dbReference type="OMA" id="FGCQALV"/>
<dbReference type="Proteomes" id="UP000002428">
    <property type="component" value="Chromosome I"/>
</dbReference>
<dbReference type="GO" id="GO:0005829">
    <property type="term" value="C:cytosol"/>
    <property type="evidence" value="ECO:0000314"/>
    <property type="project" value="CGD"/>
</dbReference>
<dbReference type="GO" id="GO:0062040">
    <property type="term" value="C:fungal biofilm matrix"/>
    <property type="evidence" value="ECO:0000314"/>
    <property type="project" value="CGD"/>
</dbReference>
<dbReference type="GO" id="GO:0005524">
    <property type="term" value="F:ATP binding"/>
    <property type="evidence" value="ECO:0007669"/>
    <property type="project" value="UniProtKB-KW"/>
</dbReference>
<dbReference type="GO" id="GO:0016887">
    <property type="term" value="F:ATP hydrolysis activity"/>
    <property type="evidence" value="ECO:0007669"/>
    <property type="project" value="RHEA"/>
</dbReference>
<dbReference type="GO" id="GO:0003723">
    <property type="term" value="F:RNA binding"/>
    <property type="evidence" value="ECO:0007669"/>
    <property type="project" value="UniProtKB-KW"/>
</dbReference>
<dbReference type="GO" id="GO:0003724">
    <property type="term" value="F:RNA helicase activity"/>
    <property type="evidence" value="ECO:0007669"/>
    <property type="project" value="UniProtKB-EC"/>
</dbReference>
<dbReference type="GO" id="GO:0003743">
    <property type="term" value="F:translation initiation factor activity"/>
    <property type="evidence" value="ECO:0007669"/>
    <property type="project" value="UniProtKB-KW"/>
</dbReference>
<dbReference type="CDD" id="cd18046">
    <property type="entry name" value="DEADc_EIF4AII_EIF4AI_DDX2"/>
    <property type="match status" value="1"/>
</dbReference>
<dbReference type="CDD" id="cd18787">
    <property type="entry name" value="SF2_C_DEAD"/>
    <property type="match status" value="1"/>
</dbReference>
<dbReference type="FunFam" id="3.40.50.300:FF:000089">
    <property type="entry name" value="Eukaryotic initiation factor 4A-II"/>
    <property type="match status" value="1"/>
</dbReference>
<dbReference type="FunFam" id="3.40.50.300:FF:000031">
    <property type="entry name" value="Eukaryotic initiation factor 4A-III"/>
    <property type="match status" value="1"/>
</dbReference>
<dbReference type="Gene3D" id="3.40.50.300">
    <property type="entry name" value="P-loop containing nucleotide triphosphate hydrolases"/>
    <property type="match status" value="2"/>
</dbReference>
<dbReference type="InterPro" id="IPR011545">
    <property type="entry name" value="DEAD/DEAH_box_helicase_dom"/>
</dbReference>
<dbReference type="InterPro" id="IPR044728">
    <property type="entry name" value="EIF4A_DEADc"/>
</dbReference>
<dbReference type="InterPro" id="IPR014001">
    <property type="entry name" value="Helicase_ATP-bd"/>
</dbReference>
<dbReference type="InterPro" id="IPR001650">
    <property type="entry name" value="Helicase_C-like"/>
</dbReference>
<dbReference type="InterPro" id="IPR027417">
    <property type="entry name" value="P-loop_NTPase"/>
</dbReference>
<dbReference type="InterPro" id="IPR000629">
    <property type="entry name" value="RNA-helicase_DEAD-box_CS"/>
</dbReference>
<dbReference type="InterPro" id="IPR014014">
    <property type="entry name" value="RNA_helicase_DEAD_Q_motif"/>
</dbReference>
<dbReference type="PANTHER" id="PTHR47958">
    <property type="entry name" value="ATP-DEPENDENT RNA HELICASE DBP3"/>
    <property type="match status" value="1"/>
</dbReference>
<dbReference type="Pfam" id="PF00270">
    <property type="entry name" value="DEAD"/>
    <property type="match status" value="1"/>
</dbReference>
<dbReference type="Pfam" id="PF00271">
    <property type="entry name" value="Helicase_C"/>
    <property type="match status" value="1"/>
</dbReference>
<dbReference type="SMART" id="SM00487">
    <property type="entry name" value="DEXDc"/>
    <property type="match status" value="1"/>
</dbReference>
<dbReference type="SMART" id="SM00490">
    <property type="entry name" value="HELICc"/>
    <property type="match status" value="1"/>
</dbReference>
<dbReference type="SUPFAM" id="SSF52540">
    <property type="entry name" value="P-loop containing nucleoside triphosphate hydrolases"/>
    <property type="match status" value="2"/>
</dbReference>
<dbReference type="PROSITE" id="PS00039">
    <property type="entry name" value="DEAD_ATP_HELICASE"/>
    <property type="match status" value="1"/>
</dbReference>
<dbReference type="PROSITE" id="PS51192">
    <property type="entry name" value="HELICASE_ATP_BIND_1"/>
    <property type="match status" value="1"/>
</dbReference>
<dbReference type="PROSITE" id="PS51194">
    <property type="entry name" value="HELICASE_CTER"/>
    <property type="match status" value="1"/>
</dbReference>
<dbReference type="PROSITE" id="PS51195">
    <property type="entry name" value="Q_MOTIF"/>
    <property type="match status" value="1"/>
</dbReference>